<gene>
    <name evidence="1" type="primary">rbcL</name>
</gene>
<proteinExistence type="inferred from homology"/>
<dbReference type="EC" id="4.1.1.39" evidence="1"/>
<dbReference type="EMBL" id="Z70067">
    <property type="protein sequence ID" value="CAA93926.1"/>
    <property type="molecule type" value="Genomic_DNA"/>
</dbReference>
<dbReference type="SMR" id="P69584"/>
<dbReference type="GO" id="GO:0009507">
    <property type="term" value="C:chloroplast"/>
    <property type="evidence" value="ECO:0007669"/>
    <property type="project" value="UniProtKB-SubCell"/>
</dbReference>
<dbReference type="GO" id="GO:0000287">
    <property type="term" value="F:magnesium ion binding"/>
    <property type="evidence" value="ECO:0007669"/>
    <property type="project" value="InterPro"/>
</dbReference>
<dbReference type="GO" id="GO:0004497">
    <property type="term" value="F:monooxygenase activity"/>
    <property type="evidence" value="ECO:0007669"/>
    <property type="project" value="UniProtKB-KW"/>
</dbReference>
<dbReference type="GO" id="GO:0016984">
    <property type="term" value="F:ribulose-bisphosphate carboxylase activity"/>
    <property type="evidence" value="ECO:0007669"/>
    <property type="project" value="UniProtKB-EC"/>
</dbReference>
<dbReference type="GO" id="GO:0009853">
    <property type="term" value="P:photorespiration"/>
    <property type="evidence" value="ECO:0007669"/>
    <property type="project" value="UniProtKB-KW"/>
</dbReference>
<dbReference type="GO" id="GO:0019253">
    <property type="term" value="P:reductive pentose-phosphate cycle"/>
    <property type="evidence" value="ECO:0007669"/>
    <property type="project" value="UniProtKB-KW"/>
</dbReference>
<dbReference type="CDD" id="cd08212">
    <property type="entry name" value="RuBisCO_large_I"/>
    <property type="match status" value="1"/>
</dbReference>
<dbReference type="FunFam" id="3.20.20.110:FF:000001">
    <property type="entry name" value="Ribulose bisphosphate carboxylase large chain"/>
    <property type="match status" value="1"/>
</dbReference>
<dbReference type="FunFam" id="3.30.70.150:FF:000001">
    <property type="entry name" value="Ribulose bisphosphate carboxylase large chain"/>
    <property type="match status" value="1"/>
</dbReference>
<dbReference type="Gene3D" id="3.20.20.110">
    <property type="entry name" value="Ribulose bisphosphate carboxylase, large subunit, C-terminal domain"/>
    <property type="match status" value="1"/>
</dbReference>
<dbReference type="Gene3D" id="3.30.70.150">
    <property type="entry name" value="RuBisCO large subunit, N-terminal domain"/>
    <property type="match status" value="1"/>
</dbReference>
<dbReference type="HAMAP" id="MF_01338">
    <property type="entry name" value="RuBisCO_L_type1"/>
    <property type="match status" value="1"/>
</dbReference>
<dbReference type="InterPro" id="IPR033966">
    <property type="entry name" value="RuBisCO"/>
</dbReference>
<dbReference type="InterPro" id="IPR020878">
    <property type="entry name" value="RuBisCo_large_chain_AS"/>
</dbReference>
<dbReference type="InterPro" id="IPR000685">
    <property type="entry name" value="RuBisCO_lsu_C"/>
</dbReference>
<dbReference type="InterPro" id="IPR036376">
    <property type="entry name" value="RuBisCO_lsu_C_sf"/>
</dbReference>
<dbReference type="InterPro" id="IPR017443">
    <property type="entry name" value="RuBisCO_lsu_fd_N"/>
</dbReference>
<dbReference type="InterPro" id="IPR036422">
    <property type="entry name" value="RuBisCO_lsu_N_sf"/>
</dbReference>
<dbReference type="InterPro" id="IPR020888">
    <property type="entry name" value="RuBisCO_lsuI"/>
</dbReference>
<dbReference type="NCBIfam" id="NF003252">
    <property type="entry name" value="PRK04208.1"/>
    <property type="match status" value="1"/>
</dbReference>
<dbReference type="PANTHER" id="PTHR42704">
    <property type="entry name" value="RIBULOSE BISPHOSPHATE CARBOXYLASE"/>
    <property type="match status" value="1"/>
</dbReference>
<dbReference type="PANTHER" id="PTHR42704:SF16">
    <property type="entry name" value="RIBULOSE BISPHOSPHATE CARBOXYLASE LARGE CHAIN"/>
    <property type="match status" value="1"/>
</dbReference>
<dbReference type="Pfam" id="PF00016">
    <property type="entry name" value="RuBisCO_large"/>
    <property type="match status" value="1"/>
</dbReference>
<dbReference type="Pfam" id="PF02788">
    <property type="entry name" value="RuBisCO_large_N"/>
    <property type="match status" value="1"/>
</dbReference>
<dbReference type="SFLD" id="SFLDG01052">
    <property type="entry name" value="RuBisCO"/>
    <property type="match status" value="1"/>
</dbReference>
<dbReference type="SFLD" id="SFLDS00014">
    <property type="entry name" value="RuBisCO"/>
    <property type="match status" value="1"/>
</dbReference>
<dbReference type="SFLD" id="SFLDG00301">
    <property type="entry name" value="RuBisCO-like_proteins"/>
    <property type="match status" value="1"/>
</dbReference>
<dbReference type="SUPFAM" id="SSF51649">
    <property type="entry name" value="RuBisCo, C-terminal domain"/>
    <property type="match status" value="1"/>
</dbReference>
<dbReference type="SUPFAM" id="SSF54966">
    <property type="entry name" value="RuBisCO, large subunit, small (N-terminal) domain"/>
    <property type="match status" value="1"/>
</dbReference>
<dbReference type="PROSITE" id="PS00157">
    <property type="entry name" value="RUBISCO_LARGE"/>
    <property type="match status" value="1"/>
</dbReference>
<name>RBL_LUPMC</name>
<organism>
    <name type="scientific">Lupinus micranthus</name>
    <name type="common">Small-flowered lupine</name>
    <dbReference type="NCBI Taxonomy" id="53230"/>
    <lineage>
        <taxon>Eukaryota</taxon>
        <taxon>Viridiplantae</taxon>
        <taxon>Streptophyta</taxon>
        <taxon>Embryophyta</taxon>
        <taxon>Tracheophyta</taxon>
        <taxon>Spermatophyta</taxon>
        <taxon>Magnoliopsida</taxon>
        <taxon>eudicotyledons</taxon>
        <taxon>Gunneridae</taxon>
        <taxon>Pentapetalae</taxon>
        <taxon>rosids</taxon>
        <taxon>fabids</taxon>
        <taxon>Fabales</taxon>
        <taxon>Fabaceae</taxon>
        <taxon>Papilionoideae</taxon>
        <taxon>50 kb inversion clade</taxon>
        <taxon>genistoids sensu lato</taxon>
        <taxon>core genistoids</taxon>
        <taxon>Genisteae</taxon>
        <taxon>Lupinus</taxon>
    </lineage>
</organism>
<accession>P69584</accession>
<accession>P92400</accession>
<accession>P92405</accession>
<evidence type="ECO:0000255" key="1">
    <source>
        <dbReference type="HAMAP-Rule" id="MF_01338"/>
    </source>
</evidence>
<sequence>SVGFKAGVKDYKLTYYTPDYETKDTDILAAFRVTPQPGVPPEEAGAAVAAESSTGTWTTVWTDGLTSLDRYKGRCYHIEPVAGEESQFIAYVAYPLDLFEEGSVTNMFTSIVGNVFGFKALRALRLEDLRIPNAYVKTFQGPPHGIQVERDKLNKYGRPLLGCTIKPKLGLSAKNYGRAVYECLRGGLDFTKDDENVNSQPFMRWRDRFLFCAEALYKAQAETGEIKGHYLNATAGTCEEMIKRAVFARELGVPIVMHDYLTGGFTANTTLAHYCRDNGLLLHIHRAMHAVIDRQKNHGMHFRVLAKALRLSGGDHIHSGTVVGKLEGEREITLGFVDLLRDDFVEKDRSRGIYFTQDWVSLPGVLPVASGGIHVWHMPALTEIFGDDSVLQFGGGTLGHPWGNAPGAVANRVALEACVQARNEGRDLASEGNQIIREASKWSPELAAACEVWKE</sequence>
<keyword id="KW-0113">Calvin cycle</keyword>
<keyword id="KW-0120">Carbon dioxide fixation</keyword>
<keyword id="KW-0150">Chloroplast</keyword>
<keyword id="KW-1015">Disulfide bond</keyword>
<keyword id="KW-0456">Lyase</keyword>
<keyword id="KW-0460">Magnesium</keyword>
<keyword id="KW-0479">Metal-binding</keyword>
<keyword id="KW-0488">Methylation</keyword>
<keyword id="KW-0503">Monooxygenase</keyword>
<keyword id="KW-0560">Oxidoreductase</keyword>
<keyword id="KW-0601">Photorespiration</keyword>
<keyword id="KW-0602">Photosynthesis</keyword>
<keyword id="KW-0934">Plastid</keyword>
<reference key="1">
    <citation type="journal article" date="1995" name="Bot. Acta">
        <title>Molecular phylogeny of the Papilionoideae (family Leguminosae): rbcL sequences versus chemical taxonomy.</title>
        <authorList>
            <person name="Kaess E."/>
            <person name="Wink M."/>
        </authorList>
    </citation>
    <scope>NUCLEOTIDE SEQUENCE [GENOMIC DNA]</scope>
    <source>
        <tissue>Leaf</tissue>
    </source>
</reference>
<geneLocation type="chloroplast"/>
<feature type="chain" id="PRO_0000062519" description="Ribulose bisphosphate carboxylase large chain">
    <location>
        <begin position="1" status="less than"/>
        <end position="455" status="greater than"/>
    </location>
</feature>
<feature type="active site" description="Proton acceptor" evidence="1">
    <location>
        <position position="166"/>
    </location>
</feature>
<feature type="active site" description="Proton acceptor" evidence="1">
    <location>
        <position position="285"/>
    </location>
</feature>
<feature type="binding site" description="in homodimeric partner" evidence="1">
    <location>
        <position position="114"/>
    </location>
    <ligand>
        <name>substrate</name>
    </ligand>
</feature>
<feature type="binding site" evidence="1">
    <location>
        <position position="164"/>
    </location>
    <ligand>
        <name>substrate</name>
    </ligand>
</feature>
<feature type="binding site" evidence="1">
    <location>
        <position position="168"/>
    </location>
    <ligand>
        <name>substrate</name>
    </ligand>
</feature>
<feature type="binding site" description="via carbamate group" evidence="1">
    <location>
        <position position="192"/>
    </location>
    <ligand>
        <name>Mg(2+)</name>
        <dbReference type="ChEBI" id="CHEBI:18420"/>
    </ligand>
</feature>
<feature type="binding site" evidence="1">
    <location>
        <position position="194"/>
    </location>
    <ligand>
        <name>Mg(2+)</name>
        <dbReference type="ChEBI" id="CHEBI:18420"/>
    </ligand>
</feature>
<feature type="binding site" evidence="1">
    <location>
        <position position="195"/>
    </location>
    <ligand>
        <name>Mg(2+)</name>
        <dbReference type="ChEBI" id="CHEBI:18420"/>
    </ligand>
</feature>
<feature type="binding site" evidence="1">
    <location>
        <position position="286"/>
    </location>
    <ligand>
        <name>substrate</name>
    </ligand>
</feature>
<feature type="binding site" evidence="1">
    <location>
        <position position="318"/>
    </location>
    <ligand>
        <name>substrate</name>
    </ligand>
</feature>
<feature type="binding site" evidence="1">
    <location>
        <position position="370"/>
    </location>
    <ligand>
        <name>substrate</name>
    </ligand>
</feature>
<feature type="site" description="Transition state stabilizer" evidence="1">
    <location>
        <position position="325"/>
    </location>
</feature>
<feature type="modified residue" description="N6,N6,N6-trimethyllysine" evidence="1">
    <location>
        <position position="5"/>
    </location>
</feature>
<feature type="modified residue" description="N6-carboxylysine" evidence="1">
    <location>
        <position position="192"/>
    </location>
</feature>
<feature type="disulfide bond" description="Interchain; in linked form" evidence="1">
    <location>
        <position position="238"/>
    </location>
</feature>
<feature type="non-terminal residue">
    <location>
        <position position="1"/>
    </location>
</feature>
<feature type="non-terminal residue">
    <location>
        <position position="455"/>
    </location>
</feature>
<comment type="function">
    <text evidence="1">RuBisCO catalyzes two reactions: the carboxylation of D-ribulose 1,5-bisphosphate, the primary event in carbon dioxide fixation, as well as the oxidative fragmentation of the pentose substrate in the photorespiration process. Both reactions occur simultaneously and in competition at the same active site.</text>
</comment>
<comment type="catalytic activity">
    <reaction evidence="1">
        <text>2 (2R)-3-phosphoglycerate + 2 H(+) = D-ribulose 1,5-bisphosphate + CO2 + H2O</text>
        <dbReference type="Rhea" id="RHEA:23124"/>
        <dbReference type="ChEBI" id="CHEBI:15377"/>
        <dbReference type="ChEBI" id="CHEBI:15378"/>
        <dbReference type="ChEBI" id="CHEBI:16526"/>
        <dbReference type="ChEBI" id="CHEBI:57870"/>
        <dbReference type="ChEBI" id="CHEBI:58272"/>
        <dbReference type="EC" id="4.1.1.39"/>
    </reaction>
</comment>
<comment type="catalytic activity">
    <reaction evidence="1">
        <text>D-ribulose 1,5-bisphosphate + O2 = 2-phosphoglycolate + (2R)-3-phosphoglycerate + 2 H(+)</text>
        <dbReference type="Rhea" id="RHEA:36631"/>
        <dbReference type="ChEBI" id="CHEBI:15378"/>
        <dbReference type="ChEBI" id="CHEBI:15379"/>
        <dbReference type="ChEBI" id="CHEBI:57870"/>
        <dbReference type="ChEBI" id="CHEBI:58033"/>
        <dbReference type="ChEBI" id="CHEBI:58272"/>
    </reaction>
</comment>
<comment type="cofactor">
    <cofactor evidence="1">
        <name>Mg(2+)</name>
        <dbReference type="ChEBI" id="CHEBI:18420"/>
    </cofactor>
    <text evidence="1">Binds 1 Mg(2+) ion per subunit.</text>
</comment>
<comment type="subunit">
    <text evidence="1">Heterohexadecamer of 8 large chains and 8 small chains; disulfide-linked. The disulfide link is formed within the large subunit homodimers.</text>
</comment>
<comment type="subcellular location">
    <subcellularLocation>
        <location>Plastid</location>
        <location>Chloroplast</location>
    </subcellularLocation>
</comment>
<comment type="PTM">
    <text evidence="1">The disulfide bond which can form in the large chain dimeric partners within the hexadecamer appears to be associated with oxidative stress and protein turnover.</text>
</comment>
<comment type="miscellaneous">
    <text evidence="1">The basic functional RuBisCO is composed of a large chain homodimer in a 'head-to-tail' conformation. In form I RuBisCO this homodimer is arranged in a barrel-like tetramer with the small subunits forming a tetrameric 'cap' on each end of the 'barrel'.</text>
</comment>
<comment type="similarity">
    <text evidence="1">Belongs to the RuBisCO large chain family. Type I subfamily.</text>
</comment>
<protein>
    <recommendedName>
        <fullName evidence="1">Ribulose bisphosphate carboxylase large chain</fullName>
        <shortName evidence="1">RuBisCO large subunit</shortName>
        <ecNumber evidence="1">4.1.1.39</ecNumber>
    </recommendedName>
</protein>